<keyword id="KW-0025">Alternative splicing</keyword>
<keyword id="KW-0342">GTP-binding</keyword>
<keyword id="KW-0496">Mitochondrion</keyword>
<keyword id="KW-0547">Nucleotide-binding</keyword>
<keyword id="KW-1185">Reference proteome</keyword>
<keyword id="KW-0809">Transit peptide</keyword>
<reference key="1">
    <citation type="journal article" date="2000" name="Nature">
        <title>Sequence and analysis of chromosome 1 of the plant Arabidopsis thaliana.</title>
        <authorList>
            <person name="Theologis A."/>
            <person name="Ecker J.R."/>
            <person name="Palm C.J."/>
            <person name="Federspiel N.A."/>
            <person name="Kaul S."/>
            <person name="White O."/>
            <person name="Alonso J."/>
            <person name="Altafi H."/>
            <person name="Araujo R."/>
            <person name="Bowman C.L."/>
            <person name="Brooks S.Y."/>
            <person name="Buehler E."/>
            <person name="Chan A."/>
            <person name="Chao Q."/>
            <person name="Chen H."/>
            <person name="Cheuk R.F."/>
            <person name="Chin C.W."/>
            <person name="Chung M.K."/>
            <person name="Conn L."/>
            <person name="Conway A.B."/>
            <person name="Conway A.R."/>
            <person name="Creasy T.H."/>
            <person name="Dewar K."/>
            <person name="Dunn P."/>
            <person name="Etgu P."/>
            <person name="Feldblyum T.V."/>
            <person name="Feng J.-D."/>
            <person name="Fong B."/>
            <person name="Fujii C.Y."/>
            <person name="Gill J.E."/>
            <person name="Goldsmith A.D."/>
            <person name="Haas B."/>
            <person name="Hansen N.F."/>
            <person name="Hughes B."/>
            <person name="Huizar L."/>
            <person name="Hunter J.L."/>
            <person name="Jenkins J."/>
            <person name="Johnson-Hopson C."/>
            <person name="Khan S."/>
            <person name="Khaykin E."/>
            <person name="Kim C.J."/>
            <person name="Koo H.L."/>
            <person name="Kremenetskaia I."/>
            <person name="Kurtz D.B."/>
            <person name="Kwan A."/>
            <person name="Lam B."/>
            <person name="Langin-Hooper S."/>
            <person name="Lee A."/>
            <person name="Lee J.M."/>
            <person name="Lenz C.A."/>
            <person name="Li J.H."/>
            <person name="Li Y.-P."/>
            <person name="Lin X."/>
            <person name="Liu S.X."/>
            <person name="Liu Z.A."/>
            <person name="Luros J.S."/>
            <person name="Maiti R."/>
            <person name="Marziali A."/>
            <person name="Militscher J."/>
            <person name="Miranda M."/>
            <person name="Nguyen M."/>
            <person name="Nierman W.C."/>
            <person name="Osborne B.I."/>
            <person name="Pai G."/>
            <person name="Peterson J."/>
            <person name="Pham P.K."/>
            <person name="Rizzo M."/>
            <person name="Rooney T."/>
            <person name="Rowley D."/>
            <person name="Sakano H."/>
            <person name="Salzberg S.L."/>
            <person name="Schwartz J.R."/>
            <person name="Shinn P."/>
            <person name="Southwick A.M."/>
            <person name="Sun H."/>
            <person name="Tallon L.J."/>
            <person name="Tambunga G."/>
            <person name="Toriumi M.J."/>
            <person name="Town C.D."/>
            <person name="Utterback T."/>
            <person name="Van Aken S."/>
            <person name="Vaysberg M."/>
            <person name="Vysotskaia V.S."/>
            <person name="Walker M."/>
            <person name="Wu D."/>
            <person name="Yu G."/>
            <person name="Fraser C.M."/>
            <person name="Venter J.C."/>
            <person name="Davis R.W."/>
        </authorList>
    </citation>
    <scope>NUCLEOTIDE SEQUENCE [LARGE SCALE GENOMIC DNA]</scope>
    <source>
        <strain>cv. Columbia</strain>
    </source>
</reference>
<reference key="2">
    <citation type="journal article" date="2017" name="Plant J.">
        <title>Araport11: a complete reannotation of the Arabidopsis thaliana reference genome.</title>
        <authorList>
            <person name="Cheng C.Y."/>
            <person name="Krishnakumar V."/>
            <person name="Chan A.P."/>
            <person name="Thibaud-Nissen F."/>
            <person name="Schobel S."/>
            <person name="Town C.D."/>
        </authorList>
    </citation>
    <scope>GENOME REANNOTATION</scope>
    <source>
        <strain>cv. Columbia</strain>
    </source>
</reference>
<reference key="3">
    <citation type="journal article" date="2005" name="Plant Physiol.">
        <title>Analysis of the cDNAs of hypothetical genes on Arabidopsis chromosome 2 reveals numerous transcript variants.</title>
        <authorList>
            <person name="Xiao Y.-L."/>
            <person name="Smith S.R."/>
            <person name="Ishmael N."/>
            <person name="Redman J.C."/>
            <person name="Kumar N."/>
            <person name="Monaghan E.L."/>
            <person name="Ayele M."/>
            <person name="Haas B.J."/>
            <person name="Wu H.C."/>
            <person name="Town C.D."/>
        </authorList>
    </citation>
    <scope>NUCLEOTIDE SEQUENCE [LARGE SCALE MRNA] (ISOFORMS 1 AND 2)</scope>
    <source>
        <strain>cv. Columbia</strain>
    </source>
</reference>
<reference key="4">
    <citation type="journal article" date="2006" name="Plant Biotechnol. J.">
        <title>Simultaneous high-throughput recombinational cloning of open reading frames in closed and open configurations.</title>
        <authorList>
            <person name="Underwood B.A."/>
            <person name="Vanderhaeghen R."/>
            <person name="Whitford R."/>
            <person name="Town C.D."/>
            <person name="Hilson P."/>
        </authorList>
    </citation>
    <scope>NUCLEOTIDE SEQUENCE [LARGE SCALE MRNA] (ISOFORM 2)</scope>
    <source>
        <strain>cv. Columbia</strain>
    </source>
</reference>
<evidence type="ECO:0000255" key="1"/>
<evidence type="ECO:0000255" key="2">
    <source>
        <dbReference type="PROSITE-ProRule" id="PRU01058"/>
    </source>
</evidence>
<evidence type="ECO:0000305" key="3"/>
<evidence type="ECO:0000312" key="4">
    <source>
        <dbReference type="Araport" id="AT1G67460"/>
    </source>
</evidence>
<evidence type="ECO:0000312" key="5">
    <source>
        <dbReference type="EMBL" id="AAC18794.1"/>
    </source>
</evidence>
<evidence type="ECO:0000312" key="6">
    <source>
        <dbReference type="EMBL" id="AAG52303.1"/>
    </source>
</evidence>
<dbReference type="EMBL" id="AC004393">
    <property type="protein sequence ID" value="AAC18794.1"/>
    <property type="status" value="ALT_SEQ"/>
    <property type="molecule type" value="Genomic_DNA"/>
</dbReference>
<dbReference type="EMBL" id="AC011020">
    <property type="protein sequence ID" value="AAG52303.1"/>
    <property type="status" value="ALT_SEQ"/>
    <property type="molecule type" value="Genomic_DNA"/>
</dbReference>
<dbReference type="EMBL" id="CP002684">
    <property type="protein sequence ID" value="AEE34649.1"/>
    <property type="molecule type" value="Genomic_DNA"/>
</dbReference>
<dbReference type="EMBL" id="CP002684">
    <property type="protein sequence ID" value="ANM60272.1"/>
    <property type="molecule type" value="Genomic_DNA"/>
</dbReference>
<dbReference type="EMBL" id="AY800610">
    <property type="protein sequence ID" value="AAV68846.1"/>
    <property type="molecule type" value="mRNA"/>
</dbReference>
<dbReference type="EMBL" id="AY800611">
    <property type="protein sequence ID" value="AAV68847.1"/>
    <property type="molecule type" value="mRNA"/>
</dbReference>
<dbReference type="EMBL" id="DQ446406">
    <property type="protein sequence ID" value="ABE65750.1"/>
    <property type="molecule type" value="mRNA"/>
</dbReference>
<dbReference type="PIR" id="T02159">
    <property type="entry name" value="T02159"/>
</dbReference>
<dbReference type="RefSeq" id="NP_001322570.1">
    <molecule id="F4HTL8-1"/>
    <property type="nucleotide sequence ID" value="NM_001334299.1"/>
</dbReference>
<dbReference type="RefSeq" id="NP_176913.3">
    <molecule id="F4HTL8-3"/>
    <property type="nucleotide sequence ID" value="NM_105413.4"/>
</dbReference>
<dbReference type="SMR" id="F4HTL8"/>
<dbReference type="FunCoup" id="F4HTL8">
    <property type="interactions" value="1"/>
</dbReference>
<dbReference type="STRING" id="3702.F4HTL8"/>
<dbReference type="PaxDb" id="3702-AT1G67460.1"/>
<dbReference type="ProteomicsDB" id="228046">
    <molecule id="F4HTL8-1"/>
</dbReference>
<dbReference type="EnsemblPlants" id="AT1G67460.1">
    <molecule id="F4HTL8-3"/>
    <property type="protein sequence ID" value="AT1G67460.1"/>
    <property type="gene ID" value="AT1G67460"/>
</dbReference>
<dbReference type="EnsemblPlants" id="AT1G67460.2">
    <molecule id="F4HTL8-1"/>
    <property type="protein sequence ID" value="AT1G67460.2"/>
    <property type="gene ID" value="AT1G67460"/>
</dbReference>
<dbReference type="GeneID" id="843067"/>
<dbReference type="Gramene" id="AT1G67460.1">
    <molecule id="F4HTL8-3"/>
    <property type="protein sequence ID" value="AT1G67460.1"/>
    <property type="gene ID" value="AT1G67460"/>
</dbReference>
<dbReference type="Gramene" id="AT1G67460.2">
    <molecule id="F4HTL8-1"/>
    <property type="protein sequence ID" value="AT1G67460.2"/>
    <property type="gene ID" value="AT1G67460"/>
</dbReference>
<dbReference type="KEGG" id="ath:AT1G67460"/>
<dbReference type="Araport" id="AT1G67460"/>
<dbReference type="TAIR" id="AT1G67460"/>
<dbReference type="eggNOG" id="ENOG502QRR1">
    <property type="taxonomic scope" value="Eukaryota"/>
</dbReference>
<dbReference type="HOGENOM" id="CLU_931723_0_0_1"/>
<dbReference type="InParanoid" id="F4HTL8"/>
<dbReference type="PRO" id="PR:F4HTL8"/>
<dbReference type="Proteomes" id="UP000006548">
    <property type="component" value="Chromosome 1"/>
</dbReference>
<dbReference type="ExpressionAtlas" id="F4HTL8">
    <property type="expression patterns" value="baseline and differential"/>
</dbReference>
<dbReference type="GO" id="GO:0005739">
    <property type="term" value="C:mitochondrion"/>
    <property type="evidence" value="ECO:0007669"/>
    <property type="project" value="UniProtKB-SubCell"/>
</dbReference>
<dbReference type="GO" id="GO:0005525">
    <property type="term" value="F:GTP binding"/>
    <property type="evidence" value="ECO:0007669"/>
    <property type="project" value="UniProtKB-KW"/>
</dbReference>
<dbReference type="GO" id="GO:0003924">
    <property type="term" value="F:GTPase activity"/>
    <property type="evidence" value="ECO:0007669"/>
    <property type="project" value="InterPro"/>
</dbReference>
<dbReference type="Gene3D" id="3.40.50.300">
    <property type="entry name" value="P-loop containing nucleotide triphosphate hydrolases"/>
    <property type="match status" value="1"/>
</dbReference>
<dbReference type="InterPro" id="IPR030378">
    <property type="entry name" value="G_CP_dom"/>
</dbReference>
<dbReference type="InterPro" id="IPR012340">
    <property type="entry name" value="NA-bd_OB-fold"/>
</dbReference>
<dbReference type="InterPro" id="IPR027417">
    <property type="entry name" value="P-loop_NTPase"/>
</dbReference>
<dbReference type="InterPro" id="IPR004881">
    <property type="entry name" value="Ribosome_biogen_GTPase_RsgA"/>
</dbReference>
<dbReference type="InterPro" id="IPR010914">
    <property type="entry name" value="RsgA_GTPase_dom"/>
</dbReference>
<dbReference type="NCBIfam" id="TIGR00157">
    <property type="entry name" value="ribosome small subunit-dependent GTPase A"/>
    <property type="match status" value="1"/>
</dbReference>
<dbReference type="PANTHER" id="PTHR32120">
    <property type="entry name" value="SMALL RIBOSOMAL SUBUNIT BIOGENESIS GTPASE RSGA"/>
    <property type="match status" value="1"/>
</dbReference>
<dbReference type="PANTHER" id="PTHR32120:SF11">
    <property type="entry name" value="SMALL RIBOSOMAL SUBUNIT BIOGENESIS GTPASE RSGA 1, MITOCHONDRIAL-RELATED"/>
    <property type="match status" value="1"/>
</dbReference>
<dbReference type="Pfam" id="PF03193">
    <property type="entry name" value="RsgA_GTPase"/>
    <property type="match status" value="1"/>
</dbReference>
<dbReference type="SUPFAM" id="SSF50249">
    <property type="entry name" value="Nucleic acid-binding proteins"/>
    <property type="match status" value="1"/>
</dbReference>
<dbReference type="SUPFAM" id="SSF52540">
    <property type="entry name" value="P-loop containing nucleoside triphosphate hydrolases"/>
    <property type="match status" value="1"/>
</dbReference>
<dbReference type="PROSITE" id="PS50936">
    <property type="entry name" value="ENGC_GTPASE"/>
    <property type="match status" value="1"/>
</dbReference>
<dbReference type="PROSITE" id="PS51721">
    <property type="entry name" value="G_CP"/>
    <property type="match status" value="1"/>
</dbReference>
<gene>
    <name evidence="4" type="ordered locus">At1g67460</name>
    <name evidence="6" type="ORF">F12B7.1</name>
    <name evidence="5" type="ORF">T1F15.7</name>
</gene>
<name>RSGA2_ARATH</name>
<proteinExistence type="evidence at transcript level"/>
<organism>
    <name type="scientific">Arabidopsis thaliana</name>
    <name type="common">Mouse-ear cress</name>
    <dbReference type="NCBI Taxonomy" id="3702"/>
    <lineage>
        <taxon>Eukaryota</taxon>
        <taxon>Viridiplantae</taxon>
        <taxon>Streptophyta</taxon>
        <taxon>Embryophyta</taxon>
        <taxon>Tracheophyta</taxon>
        <taxon>Spermatophyta</taxon>
        <taxon>Magnoliopsida</taxon>
        <taxon>eudicotyledons</taxon>
        <taxon>Gunneridae</taxon>
        <taxon>Pentapetalae</taxon>
        <taxon>rosids</taxon>
        <taxon>malvids</taxon>
        <taxon>Brassicales</taxon>
        <taxon>Brassicaceae</taxon>
        <taxon>Camelineae</taxon>
        <taxon>Arabidopsis</taxon>
    </lineage>
</organism>
<feature type="transit peptide" description="Mitochondrion" evidence="1">
    <location>
        <begin position="1"/>
        <end position="68"/>
    </location>
</feature>
<feature type="chain" id="PRO_0000439701" description="Small ribosomal subunit biogenesis GTPase RsgA 2, mitochondrial">
    <location>
        <begin position="69"/>
        <end position="294"/>
    </location>
</feature>
<feature type="domain" description="CP-type G" evidence="2">
    <location>
        <begin position="155"/>
        <end position="294"/>
    </location>
</feature>
<feature type="binding site" evidence="1">
    <location>
        <begin position="255"/>
        <end position="263"/>
    </location>
    <ligand>
        <name>GTP</name>
        <dbReference type="ChEBI" id="CHEBI:37565"/>
    </ligand>
</feature>
<feature type="splice variant" id="VSP_058909" description="In isoform 2.">
    <original>RTVLVGDKVLVDKVD</original>
    <variation>SWWKLNLLEFESQLL</variation>
    <location>
        <begin position="126"/>
        <end position="140"/>
    </location>
</feature>
<feature type="splice variant" id="VSP_058910" description="In isoform 2.">
    <location>
        <begin position="141"/>
        <end position="294"/>
    </location>
</feature>
<feature type="splice variant" id="VSP_058911" description="In isoform 3.">
    <original>VSFFLSYFIL</original>
    <variation>AKTRRIKKSGLKIRV</variation>
    <location>
        <begin position="285"/>
        <end position="294"/>
    </location>
</feature>
<feature type="sequence conflict" description="In Ref. 3; AAV68846/AAV68847." evidence="3" ref="3">
    <original>F</original>
    <variation>L</variation>
    <location>
        <position position="61"/>
    </location>
</feature>
<feature type="sequence conflict" description="In Ref. 3; AAV68846/AAV68847." evidence="3" ref="3">
    <original>A</original>
    <variation>V</variation>
    <location>
        <position position="84"/>
    </location>
</feature>
<accession>F4HTL8</accession>
<accession>A0A1P8AUE0</accession>
<accession>O64799</accession>
<accession>Q1PFF7</accession>
<accession>Q5Q0E0</accession>
<accession>Q5Q0E1</accession>
<comment type="subcellular location">
    <subcellularLocation>
        <location evidence="1">Mitochondrion</location>
    </subcellularLocation>
</comment>
<comment type="alternative products">
    <event type="alternative splicing"/>
    <isoform>
        <id>F4HTL8-1</id>
        <name>1</name>
        <sequence type="displayed"/>
    </isoform>
    <isoform>
        <id>F4HTL8-2</id>
        <name>2</name>
        <sequence type="described" ref="VSP_058909 VSP_058910"/>
    </isoform>
    <isoform>
        <id>F4HTL8-3</id>
        <name>3</name>
        <sequence type="described" ref="VSP_058911"/>
    </isoform>
</comment>
<comment type="similarity">
    <text evidence="3">Belongs to the TRAFAC class YlqF/YawG GTPase family.</text>
</comment>
<comment type="caution">
    <text evidence="3">This protein is shorter compared to other members of the family and lacks the C-terminal part that binds zinc.</text>
</comment>
<comment type="sequence caution" evidence="3">
    <conflict type="erroneous gene model prediction">
        <sequence resource="EMBL-CDS" id="AAC18794"/>
    </conflict>
</comment>
<comment type="sequence caution" evidence="3">
    <conflict type="erroneous gene model prediction">
        <sequence resource="EMBL-CDS" id="AAG52303"/>
    </conflict>
</comment>
<sequence>MQTFSSAAALTSILRRTTIYHGGFGTGLRIRRSFYFLSAIRQENPNVTKNPHPNKTILRSFLAPVLPLDEKPNLVELQAIGTIATALADYMRVIVQDVPESDNGEDDKIGVELLCVVRKLLKKIGRTVLVGDKVLVDKVDWVDRRAKIINVFDRVSEVLDPPVANVDHLVILFSLDQPKIDPFTLTRFLVEAESIGIRITVALNKCELVTQEEVESWKIRLRSWNYEPLFCSVGTKVGIDEIAFNLRNQTSVIVGPSGVGKSSLINILRSSYGGDIKHEEVFKPVSFFLSYFIL</sequence>
<protein>
    <recommendedName>
        <fullName>Small ribosomal subunit biogenesis GTPase RsgA 2, mitochondrial</fullName>
    </recommendedName>
</protein>